<accession>Q96MR9</accession>
<accession>Q495S9</accession>
<accession>Q495T1</accession>
<feature type="chain" id="PRO_0000234589" description="Zinc finger protein 560">
    <location>
        <begin position="1"/>
        <end position="790"/>
    </location>
</feature>
<feature type="domain" description="KRAB 1" evidence="2">
    <location>
        <begin position="13"/>
        <end position="84"/>
    </location>
</feature>
<feature type="domain" description="KRAB 2" evidence="2">
    <location>
        <begin position="110"/>
        <end position="181"/>
    </location>
</feature>
<feature type="zinc finger region" description="C2H2-type 1; degenerate" evidence="1">
    <location>
        <begin position="284"/>
        <end position="314"/>
    </location>
</feature>
<feature type="zinc finger region" description="C2H2-type 2" evidence="1">
    <location>
        <begin position="348"/>
        <end position="370"/>
    </location>
</feature>
<feature type="zinc finger region" description="C2H2-type 3" evidence="1">
    <location>
        <begin position="376"/>
        <end position="398"/>
    </location>
</feature>
<feature type="zinc finger region" description="C2H2-type 4" evidence="1">
    <location>
        <begin position="404"/>
        <end position="426"/>
    </location>
</feature>
<feature type="zinc finger region" description="C2H2-type 5" evidence="1">
    <location>
        <begin position="432"/>
        <end position="454"/>
    </location>
</feature>
<feature type="zinc finger region" description="C2H2-type 6" evidence="1">
    <location>
        <begin position="488"/>
        <end position="510"/>
    </location>
</feature>
<feature type="zinc finger region" description="C2H2-type 7" evidence="1">
    <location>
        <begin position="516"/>
        <end position="538"/>
    </location>
</feature>
<feature type="zinc finger region" description="C2H2-type 8" evidence="1">
    <location>
        <begin position="544"/>
        <end position="566"/>
    </location>
</feature>
<feature type="zinc finger region" description="C2H2-type 9" evidence="1">
    <location>
        <begin position="572"/>
        <end position="594"/>
    </location>
</feature>
<feature type="zinc finger region" description="C2H2-type 10" evidence="1">
    <location>
        <begin position="600"/>
        <end position="622"/>
    </location>
</feature>
<feature type="zinc finger region" description="C2H2-type 11; degenerate" evidence="1">
    <location>
        <begin position="628"/>
        <end position="650"/>
    </location>
</feature>
<feature type="zinc finger region" description="C2H2-type 12" evidence="1">
    <location>
        <begin position="656"/>
        <end position="678"/>
    </location>
</feature>
<feature type="zinc finger region" description="C2H2-type 13" evidence="1">
    <location>
        <begin position="712"/>
        <end position="734"/>
    </location>
</feature>
<feature type="zinc finger region" description="C2H2-type 14" evidence="1">
    <location>
        <begin position="740"/>
        <end position="762"/>
    </location>
</feature>
<feature type="zinc finger region" description="C2H2-type 15" evidence="1">
    <location>
        <begin position="768"/>
        <end position="790"/>
    </location>
</feature>
<feature type="sequence variant" id="VAR_035588" description="In a colorectal cancer sample; somatic mutation." evidence="3">
    <original>G</original>
    <variation>E</variation>
    <location>
        <position position="186"/>
    </location>
</feature>
<feature type="sequence variant" id="VAR_052866" description="In dbSNP:rs10416098.">
    <original>Y</original>
    <variation>C</variation>
    <location>
        <position position="630"/>
    </location>
</feature>
<feature type="sequence conflict" description="In Ref. 1; BAB71213." evidence="4" ref="1">
    <original>V</original>
    <variation>I</variation>
    <location>
        <position position="475"/>
    </location>
</feature>
<reference key="1">
    <citation type="journal article" date="2004" name="Nat. Genet.">
        <title>Complete sequencing and characterization of 21,243 full-length human cDNAs.</title>
        <authorList>
            <person name="Ota T."/>
            <person name="Suzuki Y."/>
            <person name="Nishikawa T."/>
            <person name="Otsuki T."/>
            <person name="Sugiyama T."/>
            <person name="Irie R."/>
            <person name="Wakamatsu A."/>
            <person name="Hayashi K."/>
            <person name="Sato H."/>
            <person name="Nagai K."/>
            <person name="Kimura K."/>
            <person name="Makita H."/>
            <person name="Sekine M."/>
            <person name="Obayashi M."/>
            <person name="Nishi T."/>
            <person name="Shibahara T."/>
            <person name="Tanaka T."/>
            <person name="Ishii S."/>
            <person name="Yamamoto J."/>
            <person name="Saito K."/>
            <person name="Kawai Y."/>
            <person name="Isono Y."/>
            <person name="Nakamura Y."/>
            <person name="Nagahari K."/>
            <person name="Murakami K."/>
            <person name="Yasuda T."/>
            <person name="Iwayanagi T."/>
            <person name="Wagatsuma M."/>
            <person name="Shiratori A."/>
            <person name="Sudo H."/>
            <person name="Hosoiri T."/>
            <person name="Kaku Y."/>
            <person name="Kodaira H."/>
            <person name="Kondo H."/>
            <person name="Sugawara M."/>
            <person name="Takahashi M."/>
            <person name="Kanda K."/>
            <person name="Yokoi T."/>
            <person name="Furuya T."/>
            <person name="Kikkawa E."/>
            <person name="Omura Y."/>
            <person name="Abe K."/>
            <person name="Kamihara K."/>
            <person name="Katsuta N."/>
            <person name="Sato K."/>
            <person name="Tanikawa M."/>
            <person name="Yamazaki M."/>
            <person name="Ninomiya K."/>
            <person name="Ishibashi T."/>
            <person name="Yamashita H."/>
            <person name="Murakawa K."/>
            <person name="Fujimori K."/>
            <person name="Tanai H."/>
            <person name="Kimata M."/>
            <person name="Watanabe M."/>
            <person name="Hiraoka S."/>
            <person name="Chiba Y."/>
            <person name="Ishida S."/>
            <person name="Ono Y."/>
            <person name="Takiguchi S."/>
            <person name="Watanabe S."/>
            <person name="Yosida M."/>
            <person name="Hotuta T."/>
            <person name="Kusano J."/>
            <person name="Kanehori K."/>
            <person name="Takahashi-Fujii A."/>
            <person name="Hara H."/>
            <person name="Tanase T.-O."/>
            <person name="Nomura Y."/>
            <person name="Togiya S."/>
            <person name="Komai F."/>
            <person name="Hara R."/>
            <person name="Takeuchi K."/>
            <person name="Arita M."/>
            <person name="Imose N."/>
            <person name="Musashino K."/>
            <person name="Yuuki H."/>
            <person name="Oshima A."/>
            <person name="Sasaki N."/>
            <person name="Aotsuka S."/>
            <person name="Yoshikawa Y."/>
            <person name="Matsunawa H."/>
            <person name="Ichihara T."/>
            <person name="Shiohata N."/>
            <person name="Sano S."/>
            <person name="Moriya S."/>
            <person name="Momiyama H."/>
            <person name="Satoh N."/>
            <person name="Takami S."/>
            <person name="Terashima Y."/>
            <person name="Suzuki O."/>
            <person name="Nakagawa S."/>
            <person name="Senoh A."/>
            <person name="Mizoguchi H."/>
            <person name="Goto Y."/>
            <person name="Shimizu F."/>
            <person name="Wakebe H."/>
            <person name="Hishigaki H."/>
            <person name="Watanabe T."/>
            <person name="Sugiyama A."/>
            <person name="Takemoto M."/>
            <person name="Kawakami B."/>
            <person name="Yamazaki M."/>
            <person name="Watanabe K."/>
            <person name="Kumagai A."/>
            <person name="Itakura S."/>
            <person name="Fukuzumi Y."/>
            <person name="Fujimori Y."/>
            <person name="Komiyama M."/>
            <person name="Tashiro H."/>
            <person name="Tanigami A."/>
            <person name="Fujiwara T."/>
            <person name="Ono T."/>
            <person name="Yamada K."/>
            <person name="Fujii Y."/>
            <person name="Ozaki K."/>
            <person name="Hirao M."/>
            <person name="Ohmori Y."/>
            <person name="Kawabata A."/>
            <person name="Hikiji T."/>
            <person name="Kobatake N."/>
            <person name="Inagaki H."/>
            <person name="Ikema Y."/>
            <person name="Okamoto S."/>
            <person name="Okitani R."/>
            <person name="Kawakami T."/>
            <person name="Noguchi S."/>
            <person name="Itoh T."/>
            <person name="Shigeta K."/>
            <person name="Senba T."/>
            <person name="Matsumura K."/>
            <person name="Nakajima Y."/>
            <person name="Mizuno T."/>
            <person name="Morinaga M."/>
            <person name="Sasaki M."/>
            <person name="Togashi T."/>
            <person name="Oyama M."/>
            <person name="Hata H."/>
            <person name="Watanabe M."/>
            <person name="Komatsu T."/>
            <person name="Mizushima-Sugano J."/>
            <person name="Satoh T."/>
            <person name="Shirai Y."/>
            <person name="Takahashi Y."/>
            <person name="Nakagawa K."/>
            <person name="Okumura K."/>
            <person name="Nagase T."/>
            <person name="Nomura N."/>
            <person name="Kikuchi H."/>
            <person name="Masuho Y."/>
            <person name="Yamashita R."/>
            <person name="Nakai K."/>
            <person name="Yada T."/>
            <person name="Nakamura Y."/>
            <person name="Ohara O."/>
            <person name="Isogai T."/>
            <person name="Sugano S."/>
        </authorList>
    </citation>
    <scope>NUCLEOTIDE SEQUENCE [LARGE SCALE MRNA]</scope>
    <source>
        <tissue>Teratocarcinoma</tissue>
    </source>
</reference>
<reference key="2">
    <citation type="journal article" date="2004" name="Genome Res.">
        <title>The status, quality, and expansion of the NIH full-length cDNA project: the Mammalian Gene Collection (MGC).</title>
        <authorList>
            <consortium name="The MGC Project Team"/>
        </authorList>
    </citation>
    <scope>NUCLEOTIDE SEQUENCE [LARGE SCALE MRNA]</scope>
</reference>
<reference key="3">
    <citation type="journal article" date="2006" name="Science">
        <title>The consensus coding sequences of human breast and colorectal cancers.</title>
        <authorList>
            <person name="Sjoeblom T."/>
            <person name="Jones S."/>
            <person name="Wood L.D."/>
            <person name="Parsons D.W."/>
            <person name="Lin J."/>
            <person name="Barber T.D."/>
            <person name="Mandelker D."/>
            <person name="Leary R.J."/>
            <person name="Ptak J."/>
            <person name="Silliman N."/>
            <person name="Szabo S."/>
            <person name="Buckhaults P."/>
            <person name="Farrell C."/>
            <person name="Meeh P."/>
            <person name="Markowitz S.D."/>
            <person name="Willis J."/>
            <person name="Dawson D."/>
            <person name="Willson J.K.V."/>
            <person name="Gazdar A.F."/>
            <person name="Hartigan J."/>
            <person name="Wu L."/>
            <person name="Liu C."/>
            <person name="Parmigiani G."/>
            <person name="Park B.H."/>
            <person name="Bachman K.E."/>
            <person name="Papadopoulos N."/>
            <person name="Vogelstein B."/>
            <person name="Kinzler K.W."/>
            <person name="Velculescu V.E."/>
        </authorList>
    </citation>
    <scope>VARIANT [LARGE SCALE ANALYSIS] GLU-186</scope>
</reference>
<name>ZN560_HUMAN</name>
<gene>
    <name type="primary">ZNF560</name>
</gene>
<organism>
    <name type="scientific">Homo sapiens</name>
    <name type="common">Human</name>
    <dbReference type="NCBI Taxonomy" id="9606"/>
    <lineage>
        <taxon>Eukaryota</taxon>
        <taxon>Metazoa</taxon>
        <taxon>Chordata</taxon>
        <taxon>Craniata</taxon>
        <taxon>Vertebrata</taxon>
        <taxon>Euteleostomi</taxon>
        <taxon>Mammalia</taxon>
        <taxon>Eutheria</taxon>
        <taxon>Euarchontoglires</taxon>
        <taxon>Primates</taxon>
        <taxon>Haplorrhini</taxon>
        <taxon>Catarrhini</taxon>
        <taxon>Hominidae</taxon>
        <taxon>Homo</taxon>
    </lineage>
</organism>
<sequence length="790" mass="91121">MAYCLTNCYQYSVTFEDTAVDFTQEEWILLDPVQRNLYRDVMLENYENVAKVGFQLFKPSVISWLEEEELRTLQQGVLQDWAIKHQTSVSALQQEFWKIQTSNGIQMDLVTFDSVAVEFTQEEWTLLDPAQRNLYSDVMLENYKNLSSVGYQLFKPSLISWLEEEEELSTLPRVLQEWKMCLKTKGPALWQDNFCLKTLNGIQLARNQNGEELYDCKQCEDVFCKHPCLKTNMSTQNRGNTSECIQYAKDLLSLYNKTSTIRKVSVFSKHGKSFRLILNVQVQRKCTQDKSFEGTDYGKAFIYQSYLEAHRKTQSGEKLNEWKQCGEAFTHSTSHAVNVETHIIKNPYECKECGKDFRYPTHLNNHMQTHIGIKPYKCKHCGKTFTVPSGFLEHVRTHTGEKPYGCKECGKAFGTSAGLIEHIRCHAREKTFKCDHCGKAFISYPSLFGHLRVHNGEKPYEHKEYGKAFGTSSGVIEDRRSNTGQKRFDCDQCGKVFVSFSSLFAHLRTHTGEKPFKCYKCGKPFTSSACLRIHMRTHTEERLYQCKKCGKAFTKCSYLTKHLRTHAGEKPYECMKCGKAFTERSYLTKHLRRHSGEKPYECKKCGKAFTERSDLTKHLRRHTGDKPYEYKDCGKAFVVSSSLVDHLRTHTGYKPYKCNACEKAYSRSCVLTQHLKTHAAEKTSECNACGNSFRNSMCFHDRLKTLTKIKPYKCKDCGKAFTCHSDLTNHVRIHTGEKPYKCKECGKAFRTSSGRIQHLRTHMGEKPFECDQCGKAFASFSARIAHLKTH</sequence>
<dbReference type="EMBL" id="AK056548">
    <property type="protein sequence ID" value="BAB71213.1"/>
    <property type="molecule type" value="mRNA"/>
</dbReference>
<dbReference type="EMBL" id="BC101040">
    <property type="protein sequence ID" value="AAI01041.1"/>
    <property type="molecule type" value="mRNA"/>
</dbReference>
<dbReference type="EMBL" id="BC101041">
    <property type="protein sequence ID" value="AAI01042.1"/>
    <property type="molecule type" value="mRNA"/>
</dbReference>
<dbReference type="EMBL" id="BC101042">
    <property type="protein sequence ID" value="AAI01043.1"/>
    <property type="molecule type" value="mRNA"/>
</dbReference>
<dbReference type="CCDS" id="CCDS12214.1"/>
<dbReference type="RefSeq" id="NP_689689.2">
    <property type="nucleotide sequence ID" value="NM_152476.3"/>
</dbReference>
<dbReference type="RefSeq" id="XP_011525998.1">
    <property type="nucleotide sequence ID" value="XM_011527696.3"/>
</dbReference>
<dbReference type="RefSeq" id="XP_011525999.1">
    <property type="nucleotide sequence ID" value="XM_011527697.3"/>
</dbReference>
<dbReference type="RefSeq" id="XP_016881816.1">
    <property type="nucleotide sequence ID" value="XM_017026327.1"/>
</dbReference>
<dbReference type="RefSeq" id="XP_016881817.1">
    <property type="nucleotide sequence ID" value="XM_017026328.1"/>
</dbReference>
<dbReference type="RefSeq" id="XP_016881818.1">
    <property type="nucleotide sequence ID" value="XM_017026329.1"/>
</dbReference>
<dbReference type="RefSeq" id="XP_054175851.1">
    <property type="nucleotide sequence ID" value="XM_054319876.1"/>
</dbReference>
<dbReference type="RefSeq" id="XP_054175852.1">
    <property type="nucleotide sequence ID" value="XM_054319877.1"/>
</dbReference>
<dbReference type="SMR" id="Q96MR9"/>
<dbReference type="iPTMnet" id="Q96MR9"/>
<dbReference type="PhosphoSitePlus" id="Q96MR9"/>
<dbReference type="BioMuta" id="ZNF560"/>
<dbReference type="DMDM" id="97219157"/>
<dbReference type="jPOST" id="Q96MR9"/>
<dbReference type="MassIVE" id="Q96MR9"/>
<dbReference type="PaxDb" id="9606-ENSP00000301480"/>
<dbReference type="PeptideAtlas" id="Q96MR9"/>
<dbReference type="ProteomicsDB" id="77391"/>
<dbReference type="Antibodypedia" id="25042">
    <property type="antibodies" value="69 antibodies from 16 providers"/>
</dbReference>
<dbReference type="DNASU" id="147741"/>
<dbReference type="Ensembl" id="ENST00000301480.5">
    <property type="protein sequence ID" value="ENSP00000301480.3"/>
    <property type="gene ID" value="ENSG00000198028.4"/>
</dbReference>
<dbReference type="GeneID" id="147741"/>
<dbReference type="KEGG" id="hsa:147741"/>
<dbReference type="MANE-Select" id="ENST00000301480.5">
    <property type="protein sequence ID" value="ENSP00000301480.3"/>
    <property type="RefSeq nucleotide sequence ID" value="NM_152476.3"/>
    <property type="RefSeq protein sequence ID" value="NP_689689.2"/>
</dbReference>
<dbReference type="UCSC" id="uc002mlp.2">
    <property type="organism name" value="human"/>
</dbReference>
<dbReference type="AGR" id="HGNC:26484"/>
<dbReference type="CTD" id="147741"/>
<dbReference type="DisGeNET" id="147741"/>
<dbReference type="GeneCards" id="ZNF560"/>
<dbReference type="HGNC" id="HGNC:26484">
    <property type="gene designation" value="ZNF560"/>
</dbReference>
<dbReference type="HPA" id="ENSG00000198028">
    <property type="expression patterns" value="Group enriched (retina, testis)"/>
</dbReference>
<dbReference type="MalaCards" id="ZNF560"/>
<dbReference type="neXtProt" id="NX_Q96MR9"/>
<dbReference type="OpenTargets" id="ENSG00000198028"/>
<dbReference type="PharmGKB" id="PA134992071"/>
<dbReference type="VEuPathDB" id="HostDB:ENSG00000198028"/>
<dbReference type="eggNOG" id="KOG1721">
    <property type="taxonomic scope" value="Eukaryota"/>
</dbReference>
<dbReference type="GeneTree" id="ENSGT00940000164683"/>
<dbReference type="HOGENOM" id="CLU_002678_44_5_1"/>
<dbReference type="InParanoid" id="Q96MR9"/>
<dbReference type="OMA" id="EWKMCLK"/>
<dbReference type="OrthoDB" id="6077919at2759"/>
<dbReference type="PAN-GO" id="Q96MR9">
    <property type="GO annotations" value="3 GO annotations based on evolutionary models"/>
</dbReference>
<dbReference type="PhylomeDB" id="Q96MR9"/>
<dbReference type="TreeFam" id="TF342172"/>
<dbReference type="PathwayCommons" id="Q96MR9"/>
<dbReference type="Reactome" id="R-HSA-212436">
    <property type="pathway name" value="Generic Transcription Pathway"/>
</dbReference>
<dbReference type="BioGRID-ORCS" id="147741">
    <property type="hits" value="11 hits in 1172 CRISPR screens"/>
</dbReference>
<dbReference type="ChiTaRS" id="ZNF560">
    <property type="organism name" value="human"/>
</dbReference>
<dbReference type="GenomeRNAi" id="147741"/>
<dbReference type="Pharos" id="Q96MR9">
    <property type="development level" value="Tdark"/>
</dbReference>
<dbReference type="PRO" id="PR:Q96MR9"/>
<dbReference type="Proteomes" id="UP000005640">
    <property type="component" value="Chromosome 19"/>
</dbReference>
<dbReference type="RNAct" id="Q96MR9">
    <property type="molecule type" value="protein"/>
</dbReference>
<dbReference type="Bgee" id="ENSG00000198028">
    <property type="expression patterns" value="Expressed in male germ line stem cell (sensu Vertebrata) in testis and 52 other cell types or tissues"/>
</dbReference>
<dbReference type="GO" id="GO:0005634">
    <property type="term" value="C:nucleus"/>
    <property type="evidence" value="ECO:0000318"/>
    <property type="project" value="GO_Central"/>
</dbReference>
<dbReference type="GO" id="GO:0000981">
    <property type="term" value="F:DNA-binding transcription factor activity, RNA polymerase II-specific"/>
    <property type="evidence" value="ECO:0000318"/>
    <property type="project" value="GO_Central"/>
</dbReference>
<dbReference type="GO" id="GO:0000977">
    <property type="term" value="F:RNA polymerase II transcription regulatory region sequence-specific DNA binding"/>
    <property type="evidence" value="ECO:0000318"/>
    <property type="project" value="GO_Central"/>
</dbReference>
<dbReference type="GO" id="GO:0008270">
    <property type="term" value="F:zinc ion binding"/>
    <property type="evidence" value="ECO:0007669"/>
    <property type="project" value="UniProtKB-KW"/>
</dbReference>
<dbReference type="GO" id="GO:0006357">
    <property type="term" value="P:regulation of transcription by RNA polymerase II"/>
    <property type="evidence" value="ECO:0000318"/>
    <property type="project" value="GO_Central"/>
</dbReference>
<dbReference type="CDD" id="cd07765">
    <property type="entry name" value="KRAB_A-box"/>
    <property type="match status" value="2"/>
</dbReference>
<dbReference type="FunFam" id="3.30.160.60:FF:004194">
    <property type="match status" value="1"/>
</dbReference>
<dbReference type="FunFam" id="3.30.160.60:FF:000045">
    <property type="entry name" value="ZFP69 zinc finger protein B"/>
    <property type="match status" value="1"/>
</dbReference>
<dbReference type="FunFam" id="3.30.160.60:FF:000206">
    <property type="entry name" value="zinc finger protein 202 isoform X1"/>
    <property type="match status" value="1"/>
</dbReference>
<dbReference type="FunFam" id="3.30.160.60:FF:000184">
    <property type="entry name" value="Zinc finger protein 333"/>
    <property type="match status" value="1"/>
</dbReference>
<dbReference type="FunFam" id="3.30.160.60:FF:000052">
    <property type="entry name" value="zinc finger protein 546 isoform X1"/>
    <property type="match status" value="1"/>
</dbReference>
<dbReference type="FunFam" id="3.30.160.60:FF:000384">
    <property type="entry name" value="Zinc finger protein 550"/>
    <property type="match status" value="1"/>
</dbReference>
<dbReference type="FunFam" id="3.30.160.60:FF:001465">
    <property type="entry name" value="Zinc finger protein 560"/>
    <property type="match status" value="3"/>
</dbReference>
<dbReference type="FunFam" id="3.30.160.60:FF:001728">
    <property type="entry name" value="Zinc finger protein 560"/>
    <property type="match status" value="2"/>
</dbReference>
<dbReference type="FunFam" id="3.30.160.60:FF:002247">
    <property type="entry name" value="Zinc finger protein 560"/>
    <property type="match status" value="1"/>
</dbReference>
<dbReference type="FunFam" id="3.30.160.60:FF:002249">
    <property type="entry name" value="Zinc finger protein 560"/>
    <property type="match status" value="1"/>
</dbReference>
<dbReference type="FunFam" id="3.30.160.60:FF:000213">
    <property type="entry name" value="Zinc finger protein 624"/>
    <property type="match status" value="1"/>
</dbReference>
<dbReference type="FunFam" id="3.30.160.60:FF:001643">
    <property type="entry name" value="Zinc finger with KRAB and SCAN domains 5"/>
    <property type="match status" value="1"/>
</dbReference>
<dbReference type="Gene3D" id="6.10.140.140">
    <property type="match status" value="2"/>
</dbReference>
<dbReference type="Gene3D" id="3.30.160.60">
    <property type="entry name" value="Classic Zinc Finger"/>
    <property type="match status" value="15"/>
</dbReference>
<dbReference type="InterPro" id="IPR050589">
    <property type="entry name" value="Ikaros_C2H2-ZF"/>
</dbReference>
<dbReference type="InterPro" id="IPR001909">
    <property type="entry name" value="KRAB"/>
</dbReference>
<dbReference type="InterPro" id="IPR036051">
    <property type="entry name" value="KRAB_dom_sf"/>
</dbReference>
<dbReference type="InterPro" id="IPR036236">
    <property type="entry name" value="Znf_C2H2_sf"/>
</dbReference>
<dbReference type="InterPro" id="IPR013087">
    <property type="entry name" value="Znf_C2H2_type"/>
</dbReference>
<dbReference type="PANTHER" id="PTHR24404:SF114">
    <property type="entry name" value="KLUMPFUSS, ISOFORM B-RELATED"/>
    <property type="match status" value="1"/>
</dbReference>
<dbReference type="PANTHER" id="PTHR24404">
    <property type="entry name" value="ZINC FINGER PROTEIN"/>
    <property type="match status" value="1"/>
</dbReference>
<dbReference type="Pfam" id="PF01352">
    <property type="entry name" value="KRAB"/>
    <property type="match status" value="2"/>
</dbReference>
<dbReference type="Pfam" id="PF00096">
    <property type="entry name" value="zf-C2H2"/>
    <property type="match status" value="9"/>
</dbReference>
<dbReference type="Pfam" id="PF13912">
    <property type="entry name" value="zf-C2H2_6"/>
    <property type="match status" value="4"/>
</dbReference>
<dbReference type="SMART" id="SM00349">
    <property type="entry name" value="KRAB"/>
    <property type="match status" value="2"/>
</dbReference>
<dbReference type="SMART" id="SM00355">
    <property type="entry name" value="ZnF_C2H2"/>
    <property type="match status" value="14"/>
</dbReference>
<dbReference type="SUPFAM" id="SSF57667">
    <property type="entry name" value="beta-beta-alpha zinc fingers"/>
    <property type="match status" value="11"/>
</dbReference>
<dbReference type="SUPFAM" id="SSF109640">
    <property type="entry name" value="KRAB domain (Kruppel-associated box)"/>
    <property type="match status" value="2"/>
</dbReference>
<dbReference type="PROSITE" id="PS50805">
    <property type="entry name" value="KRAB"/>
    <property type="match status" value="2"/>
</dbReference>
<dbReference type="PROSITE" id="PS00028">
    <property type="entry name" value="ZINC_FINGER_C2H2_1"/>
    <property type="match status" value="13"/>
</dbReference>
<dbReference type="PROSITE" id="PS50157">
    <property type="entry name" value="ZINC_FINGER_C2H2_2"/>
    <property type="match status" value="14"/>
</dbReference>
<protein>
    <recommendedName>
        <fullName>Zinc finger protein 560</fullName>
    </recommendedName>
</protein>
<comment type="function">
    <text>May be involved in transcriptional regulation.</text>
</comment>
<comment type="subcellular location">
    <subcellularLocation>
        <location evidence="4">Nucleus</location>
    </subcellularLocation>
</comment>
<comment type="similarity">
    <text evidence="4">Belongs to the krueppel C2H2-type zinc-finger protein family.</text>
</comment>
<proteinExistence type="evidence at protein level"/>
<keyword id="KW-0238">DNA-binding</keyword>
<keyword id="KW-0479">Metal-binding</keyword>
<keyword id="KW-0539">Nucleus</keyword>
<keyword id="KW-1267">Proteomics identification</keyword>
<keyword id="KW-1185">Reference proteome</keyword>
<keyword id="KW-0677">Repeat</keyword>
<keyword id="KW-0804">Transcription</keyword>
<keyword id="KW-0805">Transcription regulation</keyword>
<keyword id="KW-0862">Zinc</keyword>
<keyword id="KW-0863">Zinc-finger</keyword>
<evidence type="ECO:0000255" key="1">
    <source>
        <dbReference type="PROSITE-ProRule" id="PRU00042"/>
    </source>
</evidence>
<evidence type="ECO:0000255" key="2">
    <source>
        <dbReference type="PROSITE-ProRule" id="PRU00119"/>
    </source>
</evidence>
<evidence type="ECO:0000269" key="3">
    <source>
    </source>
</evidence>
<evidence type="ECO:0000305" key="4"/>